<evidence type="ECO:0000250" key="1">
    <source>
        <dbReference type="UniProtKB" id="A0PM49"/>
    </source>
</evidence>
<evidence type="ECO:0000255" key="2">
    <source>
        <dbReference type="PROSITE-ProRule" id="PRU01266"/>
    </source>
</evidence>
<evidence type="ECO:0000256" key="3">
    <source>
        <dbReference type="SAM" id="MobiDB-lite"/>
    </source>
</evidence>
<evidence type="ECO:0000305" key="4"/>
<dbReference type="EC" id="4.1.99.26" evidence="1"/>
<dbReference type="EC" id="1.3.98.7" evidence="1"/>
<dbReference type="EMBL" id="AE000516">
    <property type="protein sequence ID" value="AAK44949.1"/>
    <property type="molecule type" value="Genomic_DNA"/>
</dbReference>
<dbReference type="PIR" id="H70640">
    <property type="entry name" value="H70640"/>
</dbReference>
<dbReference type="RefSeq" id="WP_003403490.1">
    <property type="nucleotide sequence ID" value="NZ_KK341227.1"/>
</dbReference>
<dbReference type="SMR" id="P9WJ78"/>
<dbReference type="KEGG" id="mtc:MT0720"/>
<dbReference type="PATRIC" id="fig|83331.31.peg.770"/>
<dbReference type="HOGENOM" id="CLU_009273_4_3_11"/>
<dbReference type="Proteomes" id="UP000001020">
    <property type="component" value="Chromosome"/>
</dbReference>
<dbReference type="GO" id="GO:0051539">
    <property type="term" value="F:4 iron, 4 sulfur cluster binding"/>
    <property type="evidence" value="ECO:0007669"/>
    <property type="project" value="UniProtKB-KW"/>
</dbReference>
<dbReference type="GO" id="GO:0016829">
    <property type="term" value="F:lyase activity"/>
    <property type="evidence" value="ECO:0007669"/>
    <property type="project" value="UniProtKB-KW"/>
</dbReference>
<dbReference type="GO" id="GO:0046872">
    <property type="term" value="F:metal ion binding"/>
    <property type="evidence" value="ECO:0007669"/>
    <property type="project" value="UniProtKB-KW"/>
</dbReference>
<dbReference type="GO" id="GO:0016491">
    <property type="term" value="F:oxidoreductase activity"/>
    <property type="evidence" value="ECO:0007669"/>
    <property type="project" value="UniProtKB-KW"/>
</dbReference>
<dbReference type="CDD" id="cd01335">
    <property type="entry name" value="Radical_SAM"/>
    <property type="match status" value="1"/>
</dbReference>
<dbReference type="CDD" id="cd21123">
    <property type="entry name" value="SPASM_MftC-like"/>
    <property type="match status" value="1"/>
</dbReference>
<dbReference type="FunFam" id="3.20.20.70:FF:000188">
    <property type="entry name" value="Mycofactocin radical SAM maturase MftC"/>
    <property type="match status" value="1"/>
</dbReference>
<dbReference type="Gene3D" id="3.20.20.70">
    <property type="entry name" value="Aldolase class I"/>
    <property type="match status" value="1"/>
</dbReference>
<dbReference type="InterPro" id="IPR023885">
    <property type="entry name" value="4Fe4S-binding_SPASM_dom"/>
</dbReference>
<dbReference type="InterPro" id="IPR013785">
    <property type="entry name" value="Aldolase_TIM"/>
</dbReference>
<dbReference type="InterPro" id="IPR034391">
    <property type="entry name" value="Cmo-like_SPASM_containing"/>
</dbReference>
<dbReference type="InterPro" id="IPR006638">
    <property type="entry name" value="Elp3/MiaA/NifB-like_rSAM"/>
</dbReference>
<dbReference type="InterPro" id="IPR023913">
    <property type="entry name" value="MftC"/>
</dbReference>
<dbReference type="InterPro" id="IPR017200">
    <property type="entry name" value="PqqE-like"/>
</dbReference>
<dbReference type="InterPro" id="IPR050377">
    <property type="entry name" value="Radical_SAM_PqqE_MftC-like"/>
</dbReference>
<dbReference type="InterPro" id="IPR007197">
    <property type="entry name" value="rSAM"/>
</dbReference>
<dbReference type="NCBIfam" id="TIGR03962">
    <property type="entry name" value="mycofact_rSAM"/>
    <property type="match status" value="1"/>
</dbReference>
<dbReference type="NCBIfam" id="TIGR04085">
    <property type="entry name" value="rSAM_more_4Fe4S"/>
    <property type="match status" value="1"/>
</dbReference>
<dbReference type="PANTHER" id="PTHR11228:SF7">
    <property type="entry name" value="PQQA PEPTIDE CYCLASE"/>
    <property type="match status" value="1"/>
</dbReference>
<dbReference type="PANTHER" id="PTHR11228">
    <property type="entry name" value="RADICAL SAM DOMAIN PROTEIN"/>
    <property type="match status" value="1"/>
</dbReference>
<dbReference type="Pfam" id="PF04055">
    <property type="entry name" value="Radical_SAM"/>
    <property type="match status" value="1"/>
</dbReference>
<dbReference type="Pfam" id="PF13186">
    <property type="entry name" value="SPASM"/>
    <property type="match status" value="1"/>
</dbReference>
<dbReference type="PIRSF" id="PIRSF037420">
    <property type="entry name" value="PQQ_syn_pqqE"/>
    <property type="match status" value="1"/>
</dbReference>
<dbReference type="SFLD" id="SFLDG01387">
    <property type="entry name" value="BtrN-like_SPASM_domain_contain"/>
    <property type="match status" value="1"/>
</dbReference>
<dbReference type="SFLD" id="SFLDF00316">
    <property type="entry name" value="C-terminal_tyrosine_decarboxyl"/>
    <property type="match status" value="1"/>
</dbReference>
<dbReference type="SFLD" id="SFLDG01072">
    <property type="entry name" value="dehydrogenase_like"/>
    <property type="match status" value="1"/>
</dbReference>
<dbReference type="SMART" id="SM00729">
    <property type="entry name" value="Elp3"/>
    <property type="match status" value="1"/>
</dbReference>
<dbReference type="SUPFAM" id="SSF102114">
    <property type="entry name" value="Radical SAM enzymes"/>
    <property type="match status" value="1"/>
</dbReference>
<dbReference type="PROSITE" id="PS51918">
    <property type="entry name" value="RADICAL_SAM"/>
    <property type="match status" value="1"/>
</dbReference>
<protein>
    <recommendedName>
        <fullName>Mycofactocin maturase MftC</fullName>
    </recommendedName>
    <alternativeName>
        <fullName>[Mycofactocin precursor peptide]-pyrrolidinone derivative synthase</fullName>
        <ecNumber evidence="1">4.1.99.26</ecNumber>
    </alternativeName>
    <alternativeName>
        <fullName>[Mycofactocin precursor peptide]-tyrosine decarboxylase</fullName>
        <ecNumber evidence="1">1.3.98.7</ecNumber>
    </alternativeName>
</protein>
<keyword id="KW-0004">4Fe-4S</keyword>
<keyword id="KW-0408">Iron</keyword>
<keyword id="KW-0411">Iron-sulfur</keyword>
<keyword id="KW-0456">Lyase</keyword>
<keyword id="KW-0479">Metal-binding</keyword>
<keyword id="KW-0560">Oxidoreductase</keyword>
<keyword id="KW-1185">Reference proteome</keyword>
<keyword id="KW-0949">S-adenosyl-L-methionine</keyword>
<accession>P9WJ78</accession>
<accession>L0T7F8</accession>
<accession>P95039</accession>
<accession>Q7D9E9</accession>
<reference key="1">
    <citation type="journal article" date="2002" name="J. Bacteriol.">
        <title>Whole-genome comparison of Mycobacterium tuberculosis clinical and laboratory strains.</title>
        <authorList>
            <person name="Fleischmann R.D."/>
            <person name="Alland D."/>
            <person name="Eisen J.A."/>
            <person name="Carpenter L."/>
            <person name="White O."/>
            <person name="Peterson J.D."/>
            <person name="DeBoy R.T."/>
            <person name="Dodson R.J."/>
            <person name="Gwinn M.L."/>
            <person name="Haft D.H."/>
            <person name="Hickey E.K."/>
            <person name="Kolonay J.F."/>
            <person name="Nelson W.C."/>
            <person name="Umayam L.A."/>
            <person name="Ermolaeva M.D."/>
            <person name="Salzberg S.L."/>
            <person name="Delcher A."/>
            <person name="Utterback T.R."/>
            <person name="Weidman J.F."/>
            <person name="Khouri H.M."/>
            <person name="Gill J."/>
            <person name="Mikula A."/>
            <person name="Bishai W."/>
            <person name="Jacobs W.R. Jr."/>
            <person name="Venter J.C."/>
            <person name="Fraser C.M."/>
        </authorList>
    </citation>
    <scope>NUCLEOTIDE SEQUENCE [LARGE SCALE GENOMIC DNA]</scope>
    <source>
        <strain>CDC 1551 / Oshkosh</strain>
    </source>
</reference>
<proteinExistence type="inferred from homology"/>
<name>MFTC_MYCTO</name>
<organism>
    <name type="scientific">Mycobacterium tuberculosis (strain CDC 1551 / Oshkosh)</name>
    <dbReference type="NCBI Taxonomy" id="83331"/>
    <lineage>
        <taxon>Bacteria</taxon>
        <taxon>Bacillati</taxon>
        <taxon>Actinomycetota</taxon>
        <taxon>Actinomycetes</taxon>
        <taxon>Mycobacteriales</taxon>
        <taxon>Mycobacteriaceae</taxon>
        <taxon>Mycobacterium</taxon>
        <taxon>Mycobacterium tuberculosis complex</taxon>
    </lineage>
</organism>
<sequence>MTSPVPRLIEQFERGLDAPICLTWELTYACNLACVHCLSSSGKRDPGELSTRQCKDIIDELERMQVFYVNIGGGEPTVRPDFWELVDYATAHHVGVKFSTNGVRITPEVATRLAATDYVDVQISLDGATAEVNDAIRGTGSFDMAVRALQNLAAAGFAGVKISVVITRRNVAQLDEFATLASRYGATLRITRLRPSGRGTDVWADLHPTADQQVQLYDWLVSKGERVLTGDSFFHLAPLGQSGALAGLNMCGAGRVVCLIDPVGDVYACPFAIHDHFLAGNVLSDGGFQNVWKNSSLFRELREPQSAGACGSCGHYDSCRGGCMAAKFFTGLPLDGPDPECVQGHSEPALARERHLPRPRADHSRGRRVSKPVPLTLSMRPPKRPCNESPV</sequence>
<gene>
    <name type="primary">mftC</name>
    <name type="ordered locus">MT0720</name>
</gene>
<feature type="chain" id="PRO_0000427877" description="Mycofactocin maturase MftC">
    <location>
        <begin position="1"/>
        <end position="391"/>
    </location>
</feature>
<feature type="domain" description="Radical SAM core" evidence="2">
    <location>
        <begin position="16"/>
        <end position="232"/>
    </location>
</feature>
<feature type="region of interest" description="Disordered" evidence="3">
    <location>
        <begin position="340"/>
        <end position="391"/>
    </location>
</feature>
<feature type="compositionally biased region" description="Basic and acidic residues" evidence="3">
    <location>
        <begin position="350"/>
        <end position="364"/>
    </location>
</feature>
<feature type="binding site" evidence="1">
    <location>
        <position position="30"/>
    </location>
    <ligand>
        <name>[4Fe-4S] cluster</name>
        <dbReference type="ChEBI" id="CHEBI:49883"/>
        <label>1</label>
        <note>4Fe-4S-S-AdoMet</note>
    </ligand>
</feature>
<feature type="binding site" evidence="1">
    <location>
        <position position="34"/>
    </location>
    <ligand>
        <name>[4Fe-4S] cluster</name>
        <dbReference type="ChEBI" id="CHEBI:49883"/>
        <label>1</label>
        <note>4Fe-4S-S-AdoMet</note>
    </ligand>
</feature>
<feature type="binding site" evidence="1">
    <location>
        <position position="37"/>
    </location>
    <ligand>
        <name>[4Fe-4S] cluster</name>
        <dbReference type="ChEBI" id="CHEBI:49883"/>
        <label>1</label>
        <note>4Fe-4S-S-AdoMet</note>
    </ligand>
</feature>
<feature type="binding site" evidence="1">
    <location>
        <position position="251"/>
    </location>
    <ligand>
        <name>[4Fe-4S] cluster</name>
        <dbReference type="ChEBI" id="CHEBI:49883"/>
        <label>2</label>
    </ligand>
</feature>
<feature type="binding site" evidence="1">
    <location>
        <position position="258"/>
    </location>
    <ligand>
        <name>[4Fe-4S] cluster</name>
        <dbReference type="ChEBI" id="CHEBI:49883"/>
        <label>2</label>
    </ligand>
</feature>
<feature type="binding site" evidence="1">
    <location>
        <position position="269"/>
    </location>
    <ligand>
        <name>[4Fe-4S] cluster</name>
        <dbReference type="ChEBI" id="CHEBI:49883"/>
        <label>2</label>
    </ligand>
</feature>
<feature type="binding site" evidence="1">
    <location>
        <position position="310"/>
    </location>
    <ligand>
        <name>[4Fe-4S] cluster</name>
        <dbReference type="ChEBI" id="CHEBI:49883"/>
        <label>3</label>
    </ligand>
</feature>
<feature type="binding site" evidence="1">
    <location>
        <position position="313"/>
    </location>
    <ligand>
        <name>[4Fe-4S] cluster</name>
        <dbReference type="ChEBI" id="CHEBI:49883"/>
        <label>3</label>
    </ligand>
</feature>
<feature type="binding site" evidence="1">
    <location>
        <position position="319"/>
    </location>
    <ligand>
        <name>[4Fe-4S] cluster</name>
        <dbReference type="ChEBI" id="CHEBI:49883"/>
        <label>3</label>
    </ligand>
</feature>
<feature type="binding site" evidence="1">
    <location>
        <position position="323"/>
    </location>
    <ligand>
        <name>[4Fe-4S] cluster</name>
        <dbReference type="ChEBI" id="CHEBI:49883"/>
        <label>2</label>
    </ligand>
</feature>
<feature type="binding site" evidence="1">
    <location>
        <position position="341"/>
    </location>
    <ligand>
        <name>[4Fe-4S] cluster</name>
        <dbReference type="ChEBI" id="CHEBI:49883"/>
        <label>3</label>
    </ligand>
</feature>
<comment type="function">
    <text evidence="1">Radical S-adenosylmethionine (SAM) enzyme responsible for the first step of the biosynthesis of the enzyme cofactor mycofactocin (MFT). Catalyzes two reactions at the C-terminus of the mycofactocin precursor (the MftA peptide). The first one is the oxidative decarboxylation of the C-terminal L-tyrosine of MftA, forming an unsaturated tyramine moiety. The second reaction is the cross-linking of the tyramine with the penultimate L-valine residue, forming a five-membered lactam ring. Its activity requires the presence of the MftB chaperone.</text>
</comment>
<comment type="catalytic activity">
    <reaction evidence="1">
        <text>[mycofactocin precursor peptide]-C-terminal glycyl-L-valyl-L-tyrosine + S-adenosyl-L-methionine = [mycofactocin precursor peptide]-C-terminal glycyl-N-{[2-(4-hydroxyphenyl)ethenyl]-3-methylbutanamide} + 5'-deoxyadenosine + L-methionine + CO2</text>
        <dbReference type="Rhea" id="RHEA:65492"/>
        <dbReference type="Rhea" id="RHEA-COMP:16815"/>
        <dbReference type="Rhea" id="RHEA-COMP:16816"/>
        <dbReference type="ChEBI" id="CHEBI:16526"/>
        <dbReference type="ChEBI" id="CHEBI:17319"/>
        <dbReference type="ChEBI" id="CHEBI:57844"/>
        <dbReference type="ChEBI" id="CHEBI:59789"/>
        <dbReference type="ChEBI" id="CHEBI:156515"/>
        <dbReference type="ChEBI" id="CHEBI:156517"/>
        <dbReference type="EC" id="1.3.98.7"/>
    </reaction>
</comment>
<comment type="catalytic activity">
    <reaction evidence="1">
        <text>[mycofactocin precursor peptide]-C-terminal glycyl-N-{[2-(4-hydroxyphenyl)ethenyl]-3-methylbutanamide} + AH2 + S-adenosyl-L-methionine = [mycofactocin precursor peptide]-C-terminal glycyl-N-{5-[(4-hydroxyphenyl)methyl]-4,4-dimethyl-2-oxopyrrolidin-3-yl}acetamide + 5'-deoxyadenosine + L-methionine + A + H(+)</text>
        <dbReference type="Rhea" id="RHEA:65500"/>
        <dbReference type="Rhea" id="RHEA-COMP:16816"/>
        <dbReference type="Rhea" id="RHEA-COMP:16818"/>
        <dbReference type="ChEBI" id="CHEBI:13193"/>
        <dbReference type="ChEBI" id="CHEBI:15378"/>
        <dbReference type="ChEBI" id="CHEBI:17319"/>
        <dbReference type="ChEBI" id="CHEBI:17499"/>
        <dbReference type="ChEBI" id="CHEBI:57844"/>
        <dbReference type="ChEBI" id="CHEBI:59789"/>
        <dbReference type="ChEBI" id="CHEBI:156517"/>
        <dbReference type="ChEBI" id="CHEBI:156518"/>
        <dbReference type="EC" id="4.1.99.26"/>
    </reaction>
</comment>
<comment type="cofactor">
    <cofactor evidence="1">
        <name>[4Fe-4S] cluster</name>
        <dbReference type="ChEBI" id="CHEBI:49883"/>
    </cofactor>
    <text evidence="1">Binds 3 [4Fe-4S] clusters. One cluster is coordinated with 3 cysteines and an exchangeable S-adenosyl-L-methionine. All three [Fe-S] clusters are required for MftC modification of MftA.</text>
</comment>
<comment type="similarity">
    <text evidence="4">Belongs to the radical SAM superfamily.</text>
</comment>